<accession>D4GSF3</accession>
<dbReference type="EC" id="2.7.7.-"/>
<dbReference type="EMBL" id="CP001956">
    <property type="protein sequence ID" value="ADE04227.1"/>
    <property type="molecule type" value="Genomic_DNA"/>
</dbReference>
<dbReference type="RefSeq" id="WP_004044375.1">
    <property type="nucleotide sequence ID" value="NC_013967.1"/>
</dbReference>
<dbReference type="SMR" id="D4GSF3"/>
<dbReference type="STRING" id="309800.HVO_0558"/>
<dbReference type="PaxDb" id="309800-C498_15935"/>
<dbReference type="EnsemblBacteria" id="ADE04227">
    <property type="protein sequence ID" value="ADE04227"/>
    <property type="gene ID" value="HVO_0558"/>
</dbReference>
<dbReference type="GeneID" id="8925734"/>
<dbReference type="KEGG" id="hvo:HVO_0558"/>
<dbReference type="eggNOG" id="arCOG01676">
    <property type="taxonomic scope" value="Archaea"/>
</dbReference>
<dbReference type="HOGENOM" id="CLU_013325_10_0_2"/>
<dbReference type="OrthoDB" id="7915at2157"/>
<dbReference type="BioCyc" id="MetaCyc:MONOMER-20239"/>
<dbReference type="BRENDA" id="2.7.7.100">
    <property type="organism ID" value="2561"/>
</dbReference>
<dbReference type="BRENDA" id="6.2.1.55">
    <property type="organism ID" value="2561"/>
</dbReference>
<dbReference type="Proteomes" id="UP000008243">
    <property type="component" value="Chromosome"/>
</dbReference>
<dbReference type="GO" id="GO:0005829">
    <property type="term" value="C:cytosol"/>
    <property type="evidence" value="ECO:0007669"/>
    <property type="project" value="TreeGrafter"/>
</dbReference>
<dbReference type="GO" id="GO:0005524">
    <property type="term" value="F:ATP binding"/>
    <property type="evidence" value="ECO:0007669"/>
    <property type="project" value="UniProtKB-KW"/>
</dbReference>
<dbReference type="GO" id="GO:0046872">
    <property type="term" value="F:metal ion binding"/>
    <property type="evidence" value="ECO:0007669"/>
    <property type="project" value="UniProtKB-KW"/>
</dbReference>
<dbReference type="GO" id="GO:0016779">
    <property type="term" value="F:nucleotidyltransferase activity"/>
    <property type="evidence" value="ECO:0007669"/>
    <property type="project" value="UniProtKB-KW"/>
</dbReference>
<dbReference type="GO" id="GO:0008146">
    <property type="term" value="F:sulfotransferase activity"/>
    <property type="evidence" value="ECO:0007669"/>
    <property type="project" value="TreeGrafter"/>
</dbReference>
<dbReference type="GO" id="GO:0004792">
    <property type="term" value="F:thiosulfate-cyanide sulfurtransferase activity"/>
    <property type="evidence" value="ECO:0007669"/>
    <property type="project" value="TreeGrafter"/>
</dbReference>
<dbReference type="GO" id="GO:0008641">
    <property type="term" value="F:ubiquitin-like modifier activating enzyme activity"/>
    <property type="evidence" value="ECO:0000315"/>
    <property type="project" value="UniProtKB"/>
</dbReference>
<dbReference type="CDD" id="cd00757">
    <property type="entry name" value="ThiF_MoeB_HesA_family"/>
    <property type="match status" value="1"/>
</dbReference>
<dbReference type="FunFam" id="3.40.50.720:FF:000033">
    <property type="entry name" value="Adenylyltransferase and sulfurtransferase MOCS3"/>
    <property type="match status" value="1"/>
</dbReference>
<dbReference type="Gene3D" id="3.40.50.720">
    <property type="entry name" value="NAD(P)-binding Rossmann-like Domain"/>
    <property type="match status" value="1"/>
</dbReference>
<dbReference type="InterPro" id="IPR045886">
    <property type="entry name" value="ThiF/MoeB/HesA"/>
</dbReference>
<dbReference type="InterPro" id="IPR000594">
    <property type="entry name" value="ThiF_NAD_FAD-bd"/>
</dbReference>
<dbReference type="InterPro" id="IPR035985">
    <property type="entry name" value="Ubiquitin-activating_enz"/>
</dbReference>
<dbReference type="NCBIfam" id="NF004281">
    <property type="entry name" value="PRK05690.1"/>
    <property type="match status" value="1"/>
</dbReference>
<dbReference type="NCBIfam" id="NF047750">
    <property type="entry name" value="SAMPActivE1UbaA"/>
    <property type="match status" value="1"/>
</dbReference>
<dbReference type="PANTHER" id="PTHR10953:SF102">
    <property type="entry name" value="ADENYLYLTRANSFERASE AND SULFURTRANSFERASE MOCS3"/>
    <property type="match status" value="1"/>
</dbReference>
<dbReference type="PANTHER" id="PTHR10953">
    <property type="entry name" value="UBIQUITIN-ACTIVATING ENZYME E1"/>
    <property type="match status" value="1"/>
</dbReference>
<dbReference type="Pfam" id="PF00899">
    <property type="entry name" value="ThiF"/>
    <property type="match status" value="1"/>
</dbReference>
<dbReference type="SUPFAM" id="SSF69572">
    <property type="entry name" value="Activating enzymes of the ubiquitin-like proteins"/>
    <property type="match status" value="1"/>
</dbReference>
<comment type="function">
    <text evidence="3 4 5">Likely activates multiple ubiquitin-like SAMPs for protein conjugation as well as for sulfur transfer, via ATP-dependent adenylation at their C-terminus (PubMed:21368171, PubMed:24097257, PubMed:24906001). In fact, it is required for the formation of all three SAMP1-, SAMP2- and SAMP3-protein conjugates, and for molybdenum cofactor (MoCo) biosynthesis and thiolation of tRNAs (PubMed:21368171, PubMed:24097257).</text>
</comment>
<comment type="catalytic activity">
    <reaction>
        <text>[small archaeal modifier protein]-C-terminal Gly-Gly + ATP + H(+) = [small archaeal modifier protein]-C-terminal Gly-Gly-AMP + diphosphate</text>
        <dbReference type="Rhea" id="RHEA:56100"/>
        <dbReference type="Rhea" id="RHEA-COMP:14381"/>
        <dbReference type="Rhea" id="RHEA-COMP:14383"/>
        <dbReference type="ChEBI" id="CHEBI:15378"/>
        <dbReference type="ChEBI" id="CHEBI:30616"/>
        <dbReference type="ChEBI" id="CHEBI:33019"/>
        <dbReference type="ChEBI" id="CHEBI:90618"/>
        <dbReference type="ChEBI" id="CHEBI:90778"/>
    </reaction>
</comment>
<comment type="cofactor">
    <cofactor evidence="1">
        <name>Zn(2+)</name>
        <dbReference type="ChEBI" id="CHEBI:29105"/>
    </cofactor>
    <text evidence="1">Binds 1 zinc ion per subunit.</text>
</comment>
<comment type="subunit">
    <text evidence="5">Interacts with NcsA.</text>
</comment>
<comment type="PTM">
    <text evidence="2">Sampylated at Lys-113 with the archaeal ubiquitin-like protein SAMP2. Also sampylated with SAMP1.</text>
</comment>
<comment type="disruption phenotype">
    <text evidence="3">Cells lacking this gene are deficient in sampylation, i.e. SAMP-protein conjugates. Moreover, they do not grow anaerobically with DMSO and do not show DMSO reductase activity, but their growth in the presence of oxygen is not affected; however, they are retarded in aerobic growth at 50 degrees Celsius. The lysine tRNAs of the mutant strain appear to be nonthiolated.</text>
</comment>
<comment type="similarity">
    <text evidence="7">Belongs to the HesA/MoeB/ThiF family.</text>
</comment>
<gene>
    <name type="primary">ubaA</name>
    <name type="ordered locus">HVO_0558</name>
</gene>
<organism>
    <name type="scientific">Haloferax volcanii (strain ATCC 29605 / DSM 3757 / JCM 8879 / NBRC 14742 / NCIMB 2012 / VKM B-1768 / DS2)</name>
    <name type="common">Halobacterium volcanii</name>
    <dbReference type="NCBI Taxonomy" id="309800"/>
    <lineage>
        <taxon>Archaea</taxon>
        <taxon>Methanobacteriati</taxon>
        <taxon>Methanobacteriota</taxon>
        <taxon>Stenosarchaea group</taxon>
        <taxon>Halobacteria</taxon>
        <taxon>Halobacteriales</taxon>
        <taxon>Haloferacaceae</taxon>
        <taxon>Haloferax</taxon>
    </lineage>
</organism>
<reference key="1">
    <citation type="journal article" date="2010" name="PLoS ONE">
        <title>The complete genome sequence of Haloferax volcanii DS2, a model archaeon.</title>
        <authorList>
            <person name="Hartman A.L."/>
            <person name="Norais C."/>
            <person name="Badger J.H."/>
            <person name="Delmas S."/>
            <person name="Haldenby S."/>
            <person name="Madupu R."/>
            <person name="Robinson J."/>
            <person name="Khouri H."/>
            <person name="Ren Q."/>
            <person name="Lowe T.M."/>
            <person name="Maupin-Furlow J."/>
            <person name="Pohlschroder M."/>
            <person name="Daniels C."/>
            <person name="Pfeiffer F."/>
            <person name="Allers T."/>
            <person name="Eisen J.A."/>
        </authorList>
    </citation>
    <scope>NUCLEOTIDE SEQUENCE [LARGE SCALE GENOMIC DNA]</scope>
    <source>
        <strain>ATCC 29605 / DSM 3757 / JCM 8879 / NBRC 14742 / NCIMB 2012 / VKM B-1768 / DS2</strain>
    </source>
</reference>
<reference key="2">
    <citation type="journal article" date="2010" name="Nature">
        <title>Ubiquitin-like small archaeal modifier proteins (SAMPs) in Haloferax volcanii.</title>
        <authorList>
            <person name="Humbard M.A."/>
            <person name="Miranda H.V."/>
            <person name="Lim J.M."/>
            <person name="Krause D.J."/>
            <person name="Pritz J.R."/>
            <person name="Zhou G."/>
            <person name="Chen S."/>
            <person name="Wells L."/>
            <person name="Maupin-Furlow J.A."/>
        </authorList>
    </citation>
    <scope>SAMPYLATION AT LYS-113</scope>
    <scope>IDENTIFICATION BY MASS SPECTROMETRY</scope>
    <source>
        <strain>ATCC 29605 / DSM 3757 / JCM 8879 / NBRC 14742 / NCIMB 2012 / VKM B-1768 / DS2</strain>
    </source>
</reference>
<reference key="3">
    <citation type="journal article" date="2011" name="Proc. Natl. Acad. Sci. U.S.A.">
        <title>E1- and ubiquitin-like proteins provide a direct link between protein conjugation and sulfur transfer in archaea.</title>
        <authorList>
            <person name="Miranda H.V."/>
            <person name="Nembhard N."/>
            <person name="Su D."/>
            <person name="Hepowit N."/>
            <person name="Krause D.J."/>
            <person name="Pritz J.R."/>
            <person name="Phillips C."/>
            <person name="Soll D."/>
            <person name="Maupin-Furlow J.A."/>
        </authorList>
    </citation>
    <scope>FUNCTION</scope>
    <scope>ACTIVE SITE</scope>
    <scope>MUTAGENESIS OF CYS-188</scope>
    <scope>DISRUPTION PHENOTYPE</scope>
    <source>
        <strain>DS2 / DS70</strain>
    </source>
</reference>
<reference key="4">
    <citation type="journal article" date="2014" name="Mol. Cell. Proteomics">
        <title>Archaeal ubiquitin-like SAMP3 is isopeptide-linked to proteins via a UbaA-dependent mechanism.</title>
        <authorList>
            <person name="Miranda H.V."/>
            <person name="Antelmann H."/>
            <person name="Hepowit N."/>
            <person name="Chavarria N.E."/>
            <person name="Krause D.J."/>
            <person name="Pritz J.R."/>
            <person name="Basell K."/>
            <person name="Becher D."/>
            <person name="Humbard M.A."/>
            <person name="Brocchieri L."/>
            <person name="Maupin-Furlow J.A."/>
        </authorList>
    </citation>
    <scope>FUNCTION</scope>
    <source>
        <strain>DS2 / DS70</strain>
    </source>
</reference>
<reference key="5">
    <citation type="journal article" date="2014" name="PLoS ONE">
        <title>Archaeal Tuc1/Ncs6 homolog required for wobble uridine tRNA thiolation is associated with ubiquitin-proteasome, translation, and RNA processing system homologs.</title>
        <authorList>
            <person name="Chavarria N.E."/>
            <person name="Hwang S."/>
            <person name="Cao S."/>
            <person name="Fu X."/>
            <person name="Holman M."/>
            <person name="Elbanna D."/>
            <person name="Rodriguez S."/>
            <person name="Arrington D."/>
            <person name="Englert M."/>
            <person name="Uthandi S."/>
            <person name="Soell D."/>
            <person name="Maupin-Furlow J.A."/>
        </authorList>
    </citation>
    <scope>FUNCTION</scope>
    <scope>INTERACTION WITH NCSA</scope>
    <source>
        <strain evidence="6">DS2 / DS70</strain>
    </source>
</reference>
<feature type="chain" id="PRO_0000397107" description="SAMP-activating enzyme E1">
    <location>
        <begin position="1"/>
        <end position="270"/>
    </location>
</feature>
<feature type="active site" description="Glycyl thioester intermediate" evidence="8">
    <location>
        <position position="188"/>
    </location>
</feature>
<feature type="binding site" evidence="1">
    <location>
        <position position="42"/>
    </location>
    <ligand>
        <name>ATP</name>
        <dbReference type="ChEBI" id="CHEBI:30616"/>
    </ligand>
</feature>
<feature type="binding site" evidence="1">
    <location>
        <position position="63"/>
    </location>
    <ligand>
        <name>ATP</name>
        <dbReference type="ChEBI" id="CHEBI:30616"/>
    </ligand>
</feature>
<feature type="binding site" evidence="1">
    <location>
        <begin position="70"/>
        <end position="74"/>
    </location>
    <ligand>
        <name>ATP</name>
        <dbReference type="ChEBI" id="CHEBI:30616"/>
    </ligand>
</feature>
<feature type="binding site" evidence="1">
    <location>
        <position position="87"/>
    </location>
    <ligand>
        <name>ATP</name>
        <dbReference type="ChEBI" id="CHEBI:30616"/>
    </ligand>
</feature>
<feature type="binding site" evidence="1">
    <location>
        <begin position="131"/>
        <end position="132"/>
    </location>
    <ligand>
        <name>ATP</name>
        <dbReference type="ChEBI" id="CHEBI:30616"/>
    </ligand>
</feature>
<feature type="binding site" evidence="1">
    <location>
        <position position="171"/>
    </location>
    <ligand>
        <name>Zn(2+)</name>
        <dbReference type="ChEBI" id="CHEBI:29105"/>
    </ligand>
</feature>
<feature type="binding site" evidence="1">
    <location>
        <position position="174"/>
    </location>
    <ligand>
        <name>Zn(2+)</name>
        <dbReference type="ChEBI" id="CHEBI:29105"/>
    </ligand>
</feature>
<feature type="binding site" evidence="1">
    <location>
        <position position="245"/>
    </location>
    <ligand>
        <name>Zn(2+)</name>
        <dbReference type="ChEBI" id="CHEBI:29105"/>
    </ligand>
</feature>
<feature type="binding site" evidence="1">
    <location>
        <position position="248"/>
    </location>
    <ligand>
        <name>Zn(2+)</name>
        <dbReference type="ChEBI" id="CHEBI:29105"/>
    </ligand>
</feature>
<feature type="cross-link" description="Glycyl lysine isopeptide (Lys-Gly) (interchain with G-Cter in SAMP2)">
    <location>
        <position position="113"/>
    </location>
</feature>
<feature type="mutagenesis site" description="Loss of activity since this mutant is not able to complement a ubaA deletion in trans to restore sampylation and tRNA thiolation." evidence="3">
    <original>C</original>
    <variation>S</variation>
    <location>
        <position position="188"/>
    </location>
</feature>
<sequence>MTLSLDATQLDRYSRHIIMDEVGPEGQGRLLSSRVVVVGAGGLGAPAIQYLAAVGVGELVVVDDDVVERSNLQRQVVHCDDDVGTPKAESAAAFVRGLNPDVSVEPVEARVDKSNVHEVVAGSDVVVDASDNFPTRYLLNDVCRFEGIPLVHGAIYKFEGQATTLVPDGPCYRCLFPEAPEPGTVPDCATTGVLGVLPGTVGCIQATEAMKLLLDEGEALDGRLLFYDAMDMTFETVPYRTNPDCPVCGEGGVDSIEDIDYVESCAISLD</sequence>
<keyword id="KW-0067">ATP-binding</keyword>
<keyword id="KW-1017">Isopeptide bond</keyword>
<keyword id="KW-0479">Metal-binding</keyword>
<keyword id="KW-0547">Nucleotide-binding</keyword>
<keyword id="KW-0548">Nucleotidyltransferase</keyword>
<keyword id="KW-1185">Reference proteome</keyword>
<keyword id="KW-0882">Thioester bond</keyword>
<keyword id="KW-0808">Transferase</keyword>
<keyword id="KW-0832">Ubl conjugation</keyword>
<keyword id="KW-0862">Zinc</keyword>
<proteinExistence type="evidence at protein level"/>
<protein>
    <recommendedName>
        <fullName>SAMP-activating enzyme E1</fullName>
        <ecNumber>2.7.7.-</ecNumber>
    </recommendedName>
    <alternativeName>
        <fullName>Ubiquitin-like activating enzyme of archaea</fullName>
        <shortName>Ubl-activating enzyme</shortName>
    </alternativeName>
</protein>
<evidence type="ECO:0000250" key="1"/>
<evidence type="ECO:0000269" key="2">
    <source>
    </source>
</evidence>
<evidence type="ECO:0000269" key="3">
    <source>
    </source>
</evidence>
<evidence type="ECO:0000269" key="4">
    <source>
    </source>
</evidence>
<evidence type="ECO:0000269" key="5">
    <source>
    </source>
</evidence>
<evidence type="ECO:0000303" key="6">
    <source>
    </source>
</evidence>
<evidence type="ECO:0000305" key="7"/>
<evidence type="ECO:0000305" key="8">
    <source>
    </source>
</evidence>
<name>UBAA_HALVD</name>